<reference key="1">
    <citation type="journal article" date="2007" name="Curr. Biol.">
        <title>Reduced genome of the thioautotrophic intracellular symbiont in a deep-sea clam, Calyptogena okutanii.</title>
        <authorList>
            <person name="Kuwahara H."/>
            <person name="Yoshida T."/>
            <person name="Takaki Y."/>
            <person name="Shimamura S."/>
            <person name="Nishi S."/>
            <person name="Harada M."/>
            <person name="Matsuyama K."/>
            <person name="Takishita K."/>
            <person name="Kawato M."/>
            <person name="Uematsu K."/>
            <person name="Fujiwara Y."/>
            <person name="Sato T."/>
            <person name="Kato C."/>
            <person name="Kitagawa M."/>
            <person name="Kato I."/>
            <person name="Maruyama T."/>
        </authorList>
    </citation>
    <scope>NUCLEOTIDE SEQUENCE [LARGE SCALE GENOMIC DNA]</scope>
    <source>
        <strain>HA</strain>
    </source>
</reference>
<feature type="chain" id="PRO_1000056440" description="Beta-ketoacyl-[acyl-carrier-protein] synthase III">
    <location>
        <begin position="1"/>
        <end position="314"/>
    </location>
</feature>
<feature type="region of interest" description="ACP-binding" evidence="1">
    <location>
        <begin position="242"/>
        <end position="246"/>
    </location>
</feature>
<feature type="active site" evidence="1">
    <location>
        <position position="112"/>
    </location>
</feature>
<feature type="active site" evidence="1">
    <location>
        <position position="241"/>
    </location>
</feature>
<feature type="active site" evidence="1">
    <location>
        <position position="271"/>
    </location>
</feature>
<protein>
    <recommendedName>
        <fullName evidence="1">Beta-ketoacyl-[acyl-carrier-protein] synthase III</fullName>
        <shortName evidence="1">Beta-ketoacyl-ACP synthase III</shortName>
        <shortName evidence="1">KAS III</shortName>
        <ecNumber evidence="1">2.3.1.180</ecNumber>
    </recommendedName>
    <alternativeName>
        <fullName evidence="1">3-oxoacyl-[acyl-carrier-protein] synthase 3</fullName>
    </alternativeName>
    <alternativeName>
        <fullName evidence="1">3-oxoacyl-[acyl-carrier-protein] synthase III</fullName>
    </alternativeName>
</protein>
<gene>
    <name evidence="1" type="primary">fabH</name>
    <name type="ordered locus">COSY_0446</name>
</gene>
<evidence type="ECO:0000255" key="1">
    <source>
        <dbReference type="HAMAP-Rule" id="MF_01815"/>
    </source>
</evidence>
<comment type="function">
    <text evidence="1">Catalyzes the condensation reaction of fatty acid synthesis by the addition to an acyl acceptor of two carbons from malonyl-ACP. Catalyzes the first condensation reaction which initiates fatty acid synthesis and may therefore play a role in governing the total rate of fatty acid production. Possesses both acetoacetyl-ACP synthase and acetyl transacylase activities. Its substrate specificity determines the biosynthesis of branched-chain and/or straight-chain of fatty acids.</text>
</comment>
<comment type="catalytic activity">
    <reaction evidence="1">
        <text>malonyl-[ACP] + acetyl-CoA + H(+) = 3-oxobutanoyl-[ACP] + CO2 + CoA</text>
        <dbReference type="Rhea" id="RHEA:12080"/>
        <dbReference type="Rhea" id="RHEA-COMP:9623"/>
        <dbReference type="Rhea" id="RHEA-COMP:9625"/>
        <dbReference type="ChEBI" id="CHEBI:15378"/>
        <dbReference type="ChEBI" id="CHEBI:16526"/>
        <dbReference type="ChEBI" id="CHEBI:57287"/>
        <dbReference type="ChEBI" id="CHEBI:57288"/>
        <dbReference type="ChEBI" id="CHEBI:78449"/>
        <dbReference type="ChEBI" id="CHEBI:78450"/>
        <dbReference type="EC" id="2.3.1.180"/>
    </reaction>
</comment>
<comment type="pathway">
    <text evidence="1">Lipid metabolism; fatty acid biosynthesis.</text>
</comment>
<comment type="subunit">
    <text evidence="1">Homodimer.</text>
</comment>
<comment type="subcellular location">
    <subcellularLocation>
        <location evidence="1">Cytoplasm</location>
    </subcellularLocation>
</comment>
<comment type="domain">
    <text evidence="1">The last Arg residue of the ACP-binding site is essential for the weak association between ACP/AcpP and FabH.</text>
</comment>
<comment type="similarity">
    <text evidence="1">Belongs to the thiolase-like superfamily. FabH family.</text>
</comment>
<name>FABH_VESOH</name>
<organism>
    <name type="scientific">Vesicomyosocius okutanii subsp. Calyptogena okutanii (strain HA)</name>
    <dbReference type="NCBI Taxonomy" id="412965"/>
    <lineage>
        <taxon>Bacteria</taxon>
        <taxon>Pseudomonadati</taxon>
        <taxon>Pseudomonadota</taxon>
        <taxon>Gammaproteobacteria</taxon>
        <taxon>Candidatus Pseudothioglobaceae</taxon>
        <taxon>Candidatus Vesicomyosocius</taxon>
    </lineage>
</organism>
<accession>A5CWU7</accession>
<dbReference type="EC" id="2.3.1.180" evidence="1"/>
<dbReference type="EMBL" id="AP009247">
    <property type="protein sequence ID" value="BAF61565.1"/>
    <property type="molecule type" value="Genomic_DNA"/>
</dbReference>
<dbReference type="RefSeq" id="WP_011929835.1">
    <property type="nucleotide sequence ID" value="NC_009465.1"/>
</dbReference>
<dbReference type="SMR" id="A5CWU7"/>
<dbReference type="STRING" id="412965.COSY_0446"/>
<dbReference type="KEGG" id="vok:COSY_0446"/>
<dbReference type="eggNOG" id="COG0332">
    <property type="taxonomic scope" value="Bacteria"/>
</dbReference>
<dbReference type="HOGENOM" id="CLU_039592_3_1_6"/>
<dbReference type="OrthoDB" id="9815506at2"/>
<dbReference type="UniPathway" id="UPA00094"/>
<dbReference type="Proteomes" id="UP000000247">
    <property type="component" value="Chromosome"/>
</dbReference>
<dbReference type="GO" id="GO:0005737">
    <property type="term" value="C:cytoplasm"/>
    <property type="evidence" value="ECO:0007669"/>
    <property type="project" value="UniProtKB-SubCell"/>
</dbReference>
<dbReference type="GO" id="GO:0004315">
    <property type="term" value="F:3-oxoacyl-[acyl-carrier-protein] synthase activity"/>
    <property type="evidence" value="ECO:0007669"/>
    <property type="project" value="InterPro"/>
</dbReference>
<dbReference type="GO" id="GO:0033818">
    <property type="term" value="F:beta-ketoacyl-acyl-carrier-protein synthase III activity"/>
    <property type="evidence" value="ECO:0007669"/>
    <property type="project" value="UniProtKB-UniRule"/>
</dbReference>
<dbReference type="GO" id="GO:0006633">
    <property type="term" value="P:fatty acid biosynthetic process"/>
    <property type="evidence" value="ECO:0007669"/>
    <property type="project" value="UniProtKB-UniRule"/>
</dbReference>
<dbReference type="CDD" id="cd00830">
    <property type="entry name" value="KAS_III"/>
    <property type="match status" value="1"/>
</dbReference>
<dbReference type="FunFam" id="3.40.47.10:FF:000004">
    <property type="entry name" value="3-oxoacyl-[acyl-carrier-protein] synthase 3"/>
    <property type="match status" value="1"/>
</dbReference>
<dbReference type="Gene3D" id="3.40.47.10">
    <property type="match status" value="1"/>
</dbReference>
<dbReference type="HAMAP" id="MF_01815">
    <property type="entry name" value="FabH"/>
    <property type="match status" value="1"/>
</dbReference>
<dbReference type="InterPro" id="IPR013747">
    <property type="entry name" value="ACP_syn_III_C"/>
</dbReference>
<dbReference type="InterPro" id="IPR013751">
    <property type="entry name" value="ACP_syn_III_N"/>
</dbReference>
<dbReference type="InterPro" id="IPR004655">
    <property type="entry name" value="FabH"/>
</dbReference>
<dbReference type="InterPro" id="IPR016039">
    <property type="entry name" value="Thiolase-like"/>
</dbReference>
<dbReference type="NCBIfam" id="TIGR00747">
    <property type="entry name" value="fabH"/>
    <property type="match status" value="1"/>
</dbReference>
<dbReference type="NCBIfam" id="NF006829">
    <property type="entry name" value="PRK09352.1"/>
    <property type="match status" value="1"/>
</dbReference>
<dbReference type="PANTHER" id="PTHR43091">
    <property type="entry name" value="3-OXOACYL-[ACYL-CARRIER-PROTEIN] SYNTHASE"/>
    <property type="match status" value="1"/>
</dbReference>
<dbReference type="PANTHER" id="PTHR43091:SF1">
    <property type="entry name" value="BETA-KETOACYL-[ACYL-CARRIER-PROTEIN] SYNTHASE III, CHLOROPLASTIC"/>
    <property type="match status" value="1"/>
</dbReference>
<dbReference type="Pfam" id="PF08545">
    <property type="entry name" value="ACP_syn_III"/>
    <property type="match status" value="1"/>
</dbReference>
<dbReference type="Pfam" id="PF08541">
    <property type="entry name" value="ACP_syn_III_C"/>
    <property type="match status" value="1"/>
</dbReference>
<dbReference type="SUPFAM" id="SSF53901">
    <property type="entry name" value="Thiolase-like"/>
    <property type="match status" value="1"/>
</dbReference>
<sequence>MSKFARIIGTGSYLPPTVITNDDLSKTINTTNEWIVARTGIKQRHKVTNETTCDLAEKAANRALEMAGINVKDLDLIILATTTADKIFPATATILQTAIGASCPAFDLQSVCAGFIFALTTAEQYIKASAANKVLVVGSETLSRIVNWNDRSTAVLFGDGAGAVVLSGSDNTGILYSKLFSDGNYLSSLQVSNNYINEVGFIEMSGNEVFKIAVNRLSSLAEKTLKETNLNSNKLDWIVPHQANIRIISAVAKRIKTPMNKVIVTLENHGNTSAASIPLALDTAVRDGRIKRGDHLLFEGIGAGFSWGSILIQF</sequence>
<keyword id="KW-0012">Acyltransferase</keyword>
<keyword id="KW-0963">Cytoplasm</keyword>
<keyword id="KW-0275">Fatty acid biosynthesis</keyword>
<keyword id="KW-0276">Fatty acid metabolism</keyword>
<keyword id="KW-0444">Lipid biosynthesis</keyword>
<keyword id="KW-0443">Lipid metabolism</keyword>
<keyword id="KW-0511">Multifunctional enzyme</keyword>
<keyword id="KW-1185">Reference proteome</keyword>
<keyword id="KW-0808">Transferase</keyword>
<proteinExistence type="inferred from homology"/>